<name>RISB_METMP</name>
<feature type="chain" id="PRO_0000134846" description="6,7-dimethyl-8-ribityllumazine synthase">
    <location>
        <begin position="1"/>
        <end position="137"/>
    </location>
</feature>
<feature type="active site" description="Proton donor" evidence="1">
    <location>
        <position position="75"/>
    </location>
</feature>
<feature type="binding site" evidence="1">
    <location>
        <position position="11"/>
    </location>
    <ligand>
        <name>5-amino-6-(D-ribitylamino)uracil</name>
        <dbReference type="ChEBI" id="CHEBI:15934"/>
    </ligand>
</feature>
<feature type="binding site" evidence="1">
    <location>
        <begin position="43"/>
        <end position="45"/>
    </location>
    <ligand>
        <name>5-amino-6-(D-ribitylamino)uracil</name>
        <dbReference type="ChEBI" id="CHEBI:15934"/>
    </ligand>
</feature>
<feature type="binding site" evidence="1">
    <location>
        <begin position="67"/>
        <end position="69"/>
    </location>
    <ligand>
        <name>5-amino-6-(D-ribitylamino)uracil</name>
        <dbReference type="ChEBI" id="CHEBI:15934"/>
    </ligand>
</feature>
<feature type="binding site" evidence="1">
    <location>
        <begin position="72"/>
        <end position="73"/>
    </location>
    <ligand>
        <name>(2S)-2-hydroxy-3-oxobutyl phosphate</name>
        <dbReference type="ChEBI" id="CHEBI:58830"/>
    </ligand>
</feature>
<feature type="binding site" evidence="1">
    <location>
        <position position="100"/>
    </location>
    <ligand>
        <name>5-amino-6-(D-ribitylamino)uracil</name>
        <dbReference type="ChEBI" id="CHEBI:15934"/>
    </ligand>
</feature>
<feature type="binding site" evidence="1">
    <location>
        <position position="115"/>
    </location>
    <ligand>
        <name>(2S)-2-hydroxy-3-oxobutyl phosphate</name>
        <dbReference type="ChEBI" id="CHEBI:58830"/>
    </ligand>
</feature>
<dbReference type="EC" id="2.5.1.78" evidence="1"/>
<dbReference type="EMBL" id="BX950229">
    <property type="protein sequence ID" value="CAF29606.1"/>
    <property type="molecule type" value="Genomic_DNA"/>
</dbReference>
<dbReference type="RefSeq" id="WP_011169994.1">
    <property type="nucleotide sequence ID" value="NC_005791.1"/>
</dbReference>
<dbReference type="SMR" id="P61730"/>
<dbReference type="STRING" id="267377.MMP0050"/>
<dbReference type="EnsemblBacteria" id="CAF29606">
    <property type="protein sequence ID" value="CAF29606"/>
    <property type="gene ID" value="MMP0050"/>
</dbReference>
<dbReference type="GeneID" id="2761568"/>
<dbReference type="KEGG" id="mmp:MMP0050"/>
<dbReference type="PATRIC" id="fig|267377.15.peg.51"/>
<dbReference type="eggNOG" id="arCOG01323">
    <property type="taxonomic scope" value="Archaea"/>
</dbReference>
<dbReference type="HOGENOM" id="CLU_089358_3_1_2"/>
<dbReference type="OrthoDB" id="7610at2157"/>
<dbReference type="UniPathway" id="UPA00275">
    <property type="reaction ID" value="UER00404"/>
</dbReference>
<dbReference type="Proteomes" id="UP000000590">
    <property type="component" value="Chromosome"/>
</dbReference>
<dbReference type="GO" id="GO:0009349">
    <property type="term" value="C:riboflavin synthase complex"/>
    <property type="evidence" value="ECO:0007669"/>
    <property type="project" value="InterPro"/>
</dbReference>
<dbReference type="GO" id="GO:0000906">
    <property type="term" value="F:6,7-dimethyl-8-ribityllumazine synthase activity"/>
    <property type="evidence" value="ECO:0007669"/>
    <property type="project" value="UniProtKB-UniRule"/>
</dbReference>
<dbReference type="GO" id="GO:0009231">
    <property type="term" value="P:riboflavin biosynthetic process"/>
    <property type="evidence" value="ECO:0007669"/>
    <property type="project" value="UniProtKB-UniRule"/>
</dbReference>
<dbReference type="CDD" id="cd09211">
    <property type="entry name" value="Lumazine_synthase_archaeal"/>
    <property type="match status" value="1"/>
</dbReference>
<dbReference type="FunFam" id="3.40.50.960:FF:000003">
    <property type="entry name" value="6,7-dimethyl-8-ribityllumazine synthase"/>
    <property type="match status" value="1"/>
</dbReference>
<dbReference type="Gene3D" id="3.40.50.960">
    <property type="entry name" value="Lumazine/riboflavin synthase"/>
    <property type="match status" value="1"/>
</dbReference>
<dbReference type="HAMAP" id="MF_00178">
    <property type="entry name" value="Lumazine_synth"/>
    <property type="match status" value="1"/>
</dbReference>
<dbReference type="InterPro" id="IPR034964">
    <property type="entry name" value="LS"/>
</dbReference>
<dbReference type="InterPro" id="IPR002180">
    <property type="entry name" value="LS/RS"/>
</dbReference>
<dbReference type="InterPro" id="IPR036467">
    <property type="entry name" value="LS/RS_sf"/>
</dbReference>
<dbReference type="NCBIfam" id="TIGR00114">
    <property type="entry name" value="lumazine-synth"/>
    <property type="match status" value="1"/>
</dbReference>
<dbReference type="PANTHER" id="PTHR21058:SF0">
    <property type="entry name" value="6,7-DIMETHYL-8-RIBITYLLUMAZINE SYNTHASE"/>
    <property type="match status" value="1"/>
</dbReference>
<dbReference type="PANTHER" id="PTHR21058">
    <property type="entry name" value="6,7-DIMETHYL-8-RIBITYLLUMAZINE SYNTHASE DMRL SYNTHASE LUMAZINE SYNTHASE"/>
    <property type="match status" value="1"/>
</dbReference>
<dbReference type="Pfam" id="PF00885">
    <property type="entry name" value="DMRL_synthase"/>
    <property type="match status" value="1"/>
</dbReference>
<dbReference type="SUPFAM" id="SSF52121">
    <property type="entry name" value="Lumazine synthase"/>
    <property type="match status" value="1"/>
</dbReference>
<keyword id="KW-1185">Reference proteome</keyword>
<keyword id="KW-0686">Riboflavin biosynthesis</keyword>
<keyword id="KW-0808">Transferase</keyword>
<proteinExistence type="inferred from homology"/>
<reference key="1">
    <citation type="journal article" date="2004" name="J. Bacteriol.">
        <title>Complete genome sequence of the genetically tractable hydrogenotrophic methanogen Methanococcus maripaludis.</title>
        <authorList>
            <person name="Hendrickson E.L."/>
            <person name="Kaul R."/>
            <person name="Zhou Y."/>
            <person name="Bovee D."/>
            <person name="Chapman P."/>
            <person name="Chung J."/>
            <person name="Conway de Macario E."/>
            <person name="Dodsworth J.A."/>
            <person name="Gillett W."/>
            <person name="Graham D.E."/>
            <person name="Hackett M."/>
            <person name="Haydock A.K."/>
            <person name="Kang A."/>
            <person name="Land M.L."/>
            <person name="Levy R."/>
            <person name="Lie T.J."/>
            <person name="Major T.A."/>
            <person name="Moore B.C."/>
            <person name="Porat I."/>
            <person name="Palmeiri A."/>
            <person name="Rouse G."/>
            <person name="Saenphimmachak C."/>
            <person name="Soell D."/>
            <person name="Van Dien S."/>
            <person name="Wang T."/>
            <person name="Whitman W.B."/>
            <person name="Xia Q."/>
            <person name="Zhang Y."/>
            <person name="Larimer F.W."/>
            <person name="Olson M.V."/>
            <person name="Leigh J.A."/>
        </authorList>
    </citation>
    <scope>NUCLEOTIDE SEQUENCE [LARGE SCALE GENOMIC DNA]</scope>
    <source>
        <strain>DSM 14266 / JCM 13030 / NBRC 101832 / S2 / LL</strain>
    </source>
</reference>
<protein>
    <recommendedName>
        <fullName evidence="1">6,7-dimethyl-8-ribityllumazine synthase</fullName>
        <shortName evidence="1">DMRL synthase</shortName>
        <shortName evidence="1">LS</shortName>
        <shortName evidence="1">Lumazine synthase</shortName>
        <ecNumber evidence="1">2.5.1.78</ecNumber>
    </recommendedName>
</protein>
<sequence length="137" mass="15063">MVNLGFVIAEFNRDLTFMMEKMAEEHAEFLGANVSHKIMVPGSFDMPLAIKTLLQKDDIDAIVTIGCVIEGDTEHDEIVVQNAARKIADLSLDFGKPVALGIAGPGMTRMQAEDRIDYGKNAVEAAVKMVKRLKEIQ</sequence>
<accession>P61730</accession>
<organism>
    <name type="scientific">Methanococcus maripaludis (strain DSM 14266 / JCM 13030 / NBRC 101832 / S2 / LL)</name>
    <dbReference type="NCBI Taxonomy" id="267377"/>
    <lineage>
        <taxon>Archaea</taxon>
        <taxon>Methanobacteriati</taxon>
        <taxon>Methanobacteriota</taxon>
        <taxon>Methanomada group</taxon>
        <taxon>Methanococci</taxon>
        <taxon>Methanococcales</taxon>
        <taxon>Methanococcaceae</taxon>
        <taxon>Methanococcus</taxon>
    </lineage>
</organism>
<evidence type="ECO:0000255" key="1">
    <source>
        <dbReference type="HAMAP-Rule" id="MF_00178"/>
    </source>
</evidence>
<gene>
    <name evidence="1" type="primary">ribH</name>
    <name type="ordered locus">MMP0050</name>
</gene>
<comment type="function">
    <text evidence="1">Catalyzes the formation of 6,7-dimethyl-8-ribityllumazine by condensation of 5-amino-6-(D-ribitylamino)uracil with 3,4-dihydroxy-2-butanone 4-phosphate. This is the penultimate step in the biosynthesis of riboflavin.</text>
</comment>
<comment type="catalytic activity">
    <reaction evidence="1">
        <text>(2S)-2-hydroxy-3-oxobutyl phosphate + 5-amino-6-(D-ribitylamino)uracil = 6,7-dimethyl-8-(1-D-ribityl)lumazine + phosphate + 2 H2O + H(+)</text>
        <dbReference type="Rhea" id="RHEA:26152"/>
        <dbReference type="ChEBI" id="CHEBI:15377"/>
        <dbReference type="ChEBI" id="CHEBI:15378"/>
        <dbReference type="ChEBI" id="CHEBI:15934"/>
        <dbReference type="ChEBI" id="CHEBI:43474"/>
        <dbReference type="ChEBI" id="CHEBI:58201"/>
        <dbReference type="ChEBI" id="CHEBI:58830"/>
        <dbReference type="EC" id="2.5.1.78"/>
    </reaction>
</comment>
<comment type="pathway">
    <text evidence="1">Cofactor biosynthesis; riboflavin biosynthesis; riboflavin from 2-hydroxy-3-oxobutyl phosphate and 5-amino-6-(D-ribitylamino)uracil: step 1/2.</text>
</comment>
<comment type="subunit">
    <text evidence="1">Forms an icosahedral capsid composed of 60 subunits, arranged as a dodecamer of pentamers.</text>
</comment>
<comment type="similarity">
    <text evidence="1">Belongs to the DMRL synthase family.</text>
</comment>